<evidence type="ECO:0000250" key="1">
    <source>
        <dbReference type="UniProtKB" id="R4ZCU1"/>
    </source>
</evidence>
<evidence type="ECO:0000255" key="2"/>
<evidence type="ECO:0000303" key="3">
    <source>
    </source>
</evidence>
<evidence type="ECO:0000303" key="4">
    <source>
    </source>
</evidence>
<evidence type="ECO:0000303" key="5">
    <source>
    </source>
</evidence>
<evidence type="ECO:0000305" key="6"/>
<evidence type="ECO:0000305" key="7">
    <source>
    </source>
</evidence>
<evidence type="ECO:0000305" key="8">
    <source>
    </source>
</evidence>
<feature type="signal peptide" evidence="2">
    <location>
        <begin position="1"/>
        <end position="18"/>
    </location>
</feature>
<feature type="propeptide" id="PRO_0000433714" evidence="7">
    <location>
        <begin position="19"/>
        <end position="26"/>
    </location>
</feature>
<feature type="peptide" id="PRO_0000433715" description="U-actitoxin-Avd13b">
    <location>
        <begin position="27"/>
        <end position="55"/>
    </location>
</feature>
<feature type="propeptide" id="PRO_0000433716" evidence="7">
    <location>
        <begin position="59"/>
        <end position="60"/>
    </location>
</feature>
<feature type="peptide" id="PRO_0000433717" description="U-actitoxin-Avd13b">
    <location>
        <begin position="61"/>
        <end position="89"/>
    </location>
</feature>
<feature type="propeptide" id="PRO_0000433718" evidence="7">
    <location>
        <begin position="93"/>
        <end position="94"/>
    </location>
</feature>
<feature type="peptide" id="PRO_0000433719" description="U-actitoxin-Avd13b">
    <location>
        <begin position="95"/>
        <end position="123"/>
    </location>
</feature>
<feature type="propeptide" id="PRO_0000433720" evidence="7">
    <location>
        <begin position="127"/>
        <end position="128"/>
    </location>
</feature>
<feature type="peptide" id="PRO_0000433721" description="U-actitoxin-Avd13a">
    <location>
        <begin position="129"/>
        <end position="157"/>
    </location>
</feature>
<feature type="disulfide bond" evidence="1">
    <location>
        <begin position="33"/>
        <end position="45"/>
    </location>
</feature>
<feature type="disulfide bond" evidence="1">
    <location>
        <begin position="36"/>
        <end position="52"/>
    </location>
</feature>
<feature type="disulfide bond" evidence="1">
    <location>
        <begin position="67"/>
        <end position="79"/>
    </location>
</feature>
<feature type="disulfide bond" evidence="1">
    <location>
        <begin position="70"/>
        <end position="86"/>
    </location>
</feature>
<feature type="disulfide bond" evidence="1">
    <location>
        <begin position="101"/>
        <end position="113"/>
    </location>
</feature>
<feature type="disulfide bond" evidence="1">
    <location>
        <begin position="104"/>
        <end position="120"/>
    </location>
</feature>
<feature type="disulfide bond" evidence="1">
    <location>
        <begin position="135"/>
        <end position="147"/>
    </location>
</feature>
<feature type="disulfide bond" evidence="1">
    <location>
        <begin position="138"/>
        <end position="154"/>
    </location>
</feature>
<protein>
    <recommendedName>
        <fullName evidence="4">U-actitoxin-Avd13a/b</fullName>
        <shortName evidence="4">U-AITX-Avd13a/b</shortName>
    </recommendedName>
    <alternativeName>
        <fullName evidence="3">Peptide toxin AV-1</fullName>
    </alternativeName>
    <component>
        <recommendedName>
            <fullName evidence="4">U-actitoxin-Avd13b</fullName>
            <shortName evidence="4">U-AITX-Avd13b</shortName>
        </recommendedName>
        <alternativeName>
            <fullName evidence="5">AnmTX Avi 9a-1</fullName>
        </alternativeName>
    </component>
    <component>
        <recommendedName>
            <fullName evidence="4">U-actitoxin-Avd13a</fullName>
            <shortName evidence="4">U-AITX-Avd13a</shortName>
        </recommendedName>
        <alternativeName>
            <fullName evidence="5">AnmTX Avi 9a-2</fullName>
        </alternativeName>
    </component>
</protein>
<sequence length="159" mass="17758">MKSIFLVFFAVCLVKAEAGKGRKREPNIINPPCRECYVQDSSGNCVYDKWGCGGARKREPNIINPPCRECYVQDSSGNCVYDKWGCGGARKREPNIINPPCRECYVQDSSGNCVYDKWGCGGARKREPNIINPPCRECYVQDSSGNCVYHKWGCGGARK</sequence>
<proteinExistence type="evidence at transcript level"/>
<accession>P0DMZ8</accession>
<dbReference type="EMBL" id="FK719982">
    <property type="status" value="NOT_ANNOTATED_CDS"/>
    <property type="molecule type" value="mRNA"/>
</dbReference>
<dbReference type="SMR" id="P0DMZ8"/>
<dbReference type="GO" id="GO:0005576">
    <property type="term" value="C:extracellular region"/>
    <property type="evidence" value="ECO:0007669"/>
    <property type="project" value="UniProtKB-SubCell"/>
</dbReference>
<dbReference type="GO" id="GO:0042151">
    <property type="term" value="C:nematocyst"/>
    <property type="evidence" value="ECO:0007669"/>
    <property type="project" value="UniProtKB-SubCell"/>
</dbReference>
<dbReference type="CDD" id="cd21873">
    <property type="entry name" value="Ugr_9a-1-like"/>
    <property type="match status" value="4"/>
</dbReference>
<organism>
    <name type="scientific">Anemonia viridis</name>
    <name type="common">Snakelocks anemone</name>
    <dbReference type="NCBI Taxonomy" id="51769"/>
    <lineage>
        <taxon>Eukaryota</taxon>
        <taxon>Metazoa</taxon>
        <taxon>Cnidaria</taxon>
        <taxon>Anthozoa</taxon>
        <taxon>Hexacorallia</taxon>
        <taxon>Actiniaria</taxon>
        <taxon>Actiniidae</taxon>
        <taxon>Anemonia</taxon>
    </lineage>
</organism>
<keyword id="KW-0165">Cleavage on pair of basic residues</keyword>
<keyword id="KW-1015">Disulfide bond</keyword>
<keyword id="KW-0166">Nematocyst</keyword>
<keyword id="KW-0964">Secreted</keyword>
<keyword id="KW-0732">Signal</keyword>
<reference key="1">
    <citation type="journal article" date="2009" name="BMC Genomics">
        <title>Comprehensive EST analysis of the symbiotic sea anemone, Anemonia viridis.</title>
        <authorList>
            <person name="Sabourault C."/>
            <person name="Ganot P."/>
            <person name="Deleury E."/>
            <person name="Allemand D."/>
            <person name="Furla P."/>
        </authorList>
    </citation>
    <scope>NUCLEOTIDE SEQUENCE [MRNA]</scope>
</reference>
<reference key="2">
    <citation type="journal article" date="2011" name="BMC Genomics">
        <title>The mining of toxin-like polypeptides from EST database by single residue distribution analysis.</title>
        <authorList>
            <person name="Kozlov S."/>
            <person name="Grishin E."/>
        </authorList>
    </citation>
    <scope>NOMENCLATURE</scope>
</reference>
<reference key="3">
    <citation type="journal article" date="2012" name="Toxicon">
        <title>Development of a rational nomenclature for naming peptide and protein toxins from sea anemones.</title>
        <authorList>
            <person name="Oliveira J.S."/>
            <person name="Fuentes-Silva D."/>
            <person name="King G.F."/>
        </authorList>
    </citation>
    <scope>NOMENCLATURE</scope>
</reference>
<reference key="4">
    <citation type="journal article" date="2013" name="J. Biol. Chem.">
        <title>Sea anemone peptide with uncommon beta-hairpin structure inhibits acid-sensing ion channel 3 (ASIC3) and reveals analgesic activity.</title>
        <authorList>
            <person name="Osmakov D.I."/>
            <person name="Kozlov S.A."/>
            <person name="Andreev Y.A."/>
            <person name="Koshelev S.G."/>
            <person name="Sanamyan N.P."/>
            <person name="Sanamyan K.E."/>
            <person name="Dyachenko I.A."/>
            <person name="Bondarenko D.A."/>
            <person name="Murashev A.N."/>
            <person name="Mineev K.S."/>
            <person name="Arseniev A.S."/>
            <person name="Grishin E.V."/>
        </authorList>
    </citation>
    <scope>NOMENCLATURE</scope>
</reference>
<comment type="function">
    <text evidence="6">Inhibits ion channels.</text>
</comment>
<comment type="subcellular location">
    <subcellularLocation>
        <location evidence="6">Secreted</location>
    </subcellularLocation>
    <subcellularLocation>
        <location evidence="6">Nematocyst</location>
    </subcellularLocation>
</comment>
<comment type="similarity">
    <text evidence="8">Belongs to the sea anemone BBH family.</text>
</comment>
<comment type="caution">
    <text evidence="6">Opinions are divided on whether Anemonia viridis (Forsskal, 1775) and Anemonia sulcata (Pennant, 1777) are separate species.</text>
</comment>
<name>BBHDA_ANEVI</name>